<reference key="1">
    <citation type="journal article" date="2008" name="PLoS Genet.">
        <title>Complete genome sequence of the complex carbohydrate-degrading marine bacterium, Saccharophagus degradans strain 2-40 T.</title>
        <authorList>
            <person name="Weiner R.M."/>
            <person name="Taylor L.E. II"/>
            <person name="Henrissat B."/>
            <person name="Hauser L."/>
            <person name="Land M."/>
            <person name="Coutinho P.M."/>
            <person name="Rancurel C."/>
            <person name="Saunders E.H."/>
            <person name="Longmire A.G."/>
            <person name="Zhang H."/>
            <person name="Bayer E.A."/>
            <person name="Gilbert H.J."/>
            <person name="Larimer F."/>
            <person name="Zhulin I.B."/>
            <person name="Ekborg N.A."/>
            <person name="Lamed R."/>
            <person name="Richardson P.M."/>
            <person name="Borovok I."/>
            <person name="Hutcheson S."/>
        </authorList>
    </citation>
    <scope>NUCLEOTIDE SEQUENCE [LARGE SCALE GENOMIC DNA]</scope>
    <source>
        <strain>2-40 / ATCC 43961 / DSM 17024</strain>
    </source>
</reference>
<proteinExistence type="inferred from homology"/>
<evidence type="ECO:0000255" key="1">
    <source>
        <dbReference type="HAMAP-Rule" id="MF_00082"/>
    </source>
</evidence>
<protein>
    <recommendedName>
        <fullName evidence="1">Acetylglutamate kinase</fullName>
        <ecNumber evidence="1">2.7.2.8</ecNumber>
    </recommendedName>
    <alternativeName>
        <fullName evidence="1">N-acetyl-L-glutamate 5-phosphotransferase</fullName>
    </alternativeName>
    <alternativeName>
        <fullName evidence="1">NAG kinase</fullName>
        <shortName evidence="1">NAGK</shortName>
    </alternativeName>
</protein>
<dbReference type="EC" id="2.7.2.8" evidence="1"/>
<dbReference type="EMBL" id="CP000282">
    <property type="protein sequence ID" value="ABD82930.1"/>
    <property type="molecule type" value="Genomic_DNA"/>
</dbReference>
<dbReference type="RefSeq" id="WP_011470145.1">
    <property type="nucleotide sequence ID" value="NC_007912.1"/>
</dbReference>
<dbReference type="SMR" id="Q21EE9"/>
<dbReference type="STRING" id="203122.Sde_3675"/>
<dbReference type="GeneID" id="98615285"/>
<dbReference type="KEGG" id="sde:Sde_3675"/>
<dbReference type="eggNOG" id="COG0548">
    <property type="taxonomic scope" value="Bacteria"/>
</dbReference>
<dbReference type="HOGENOM" id="CLU_053680_0_0_6"/>
<dbReference type="OrthoDB" id="9803155at2"/>
<dbReference type="UniPathway" id="UPA00068">
    <property type="reaction ID" value="UER00107"/>
</dbReference>
<dbReference type="Proteomes" id="UP000001947">
    <property type="component" value="Chromosome"/>
</dbReference>
<dbReference type="GO" id="GO:0005737">
    <property type="term" value="C:cytoplasm"/>
    <property type="evidence" value="ECO:0007669"/>
    <property type="project" value="UniProtKB-SubCell"/>
</dbReference>
<dbReference type="GO" id="GO:0003991">
    <property type="term" value="F:acetylglutamate kinase activity"/>
    <property type="evidence" value="ECO:0007669"/>
    <property type="project" value="UniProtKB-UniRule"/>
</dbReference>
<dbReference type="GO" id="GO:0005524">
    <property type="term" value="F:ATP binding"/>
    <property type="evidence" value="ECO:0007669"/>
    <property type="project" value="UniProtKB-UniRule"/>
</dbReference>
<dbReference type="GO" id="GO:0042450">
    <property type="term" value="P:arginine biosynthetic process via ornithine"/>
    <property type="evidence" value="ECO:0007669"/>
    <property type="project" value="UniProtKB-UniRule"/>
</dbReference>
<dbReference type="GO" id="GO:0006526">
    <property type="term" value="P:L-arginine biosynthetic process"/>
    <property type="evidence" value="ECO:0007669"/>
    <property type="project" value="UniProtKB-UniPathway"/>
</dbReference>
<dbReference type="CDD" id="cd04250">
    <property type="entry name" value="AAK_NAGK-C"/>
    <property type="match status" value="1"/>
</dbReference>
<dbReference type="FunFam" id="3.40.1160.10:FF:000004">
    <property type="entry name" value="Acetylglutamate kinase"/>
    <property type="match status" value="1"/>
</dbReference>
<dbReference type="Gene3D" id="3.40.1160.10">
    <property type="entry name" value="Acetylglutamate kinase-like"/>
    <property type="match status" value="1"/>
</dbReference>
<dbReference type="HAMAP" id="MF_00082">
    <property type="entry name" value="ArgB"/>
    <property type="match status" value="1"/>
</dbReference>
<dbReference type="InterPro" id="IPR036393">
    <property type="entry name" value="AceGlu_kinase-like_sf"/>
</dbReference>
<dbReference type="InterPro" id="IPR004662">
    <property type="entry name" value="AcgluKinase_fam"/>
</dbReference>
<dbReference type="InterPro" id="IPR037528">
    <property type="entry name" value="ArgB"/>
</dbReference>
<dbReference type="InterPro" id="IPR001048">
    <property type="entry name" value="Asp/Glu/Uridylate_kinase"/>
</dbReference>
<dbReference type="InterPro" id="IPR001057">
    <property type="entry name" value="Glu/AcGlu_kinase"/>
</dbReference>
<dbReference type="InterPro" id="IPR041727">
    <property type="entry name" value="NAGK-C"/>
</dbReference>
<dbReference type="NCBIfam" id="TIGR00761">
    <property type="entry name" value="argB"/>
    <property type="match status" value="1"/>
</dbReference>
<dbReference type="PANTHER" id="PTHR23342">
    <property type="entry name" value="N-ACETYLGLUTAMATE SYNTHASE"/>
    <property type="match status" value="1"/>
</dbReference>
<dbReference type="PANTHER" id="PTHR23342:SF0">
    <property type="entry name" value="N-ACETYLGLUTAMATE SYNTHASE, MITOCHONDRIAL"/>
    <property type="match status" value="1"/>
</dbReference>
<dbReference type="Pfam" id="PF00696">
    <property type="entry name" value="AA_kinase"/>
    <property type="match status" value="1"/>
</dbReference>
<dbReference type="PIRSF" id="PIRSF000728">
    <property type="entry name" value="NAGK"/>
    <property type="match status" value="1"/>
</dbReference>
<dbReference type="PRINTS" id="PR00474">
    <property type="entry name" value="GLU5KINASE"/>
</dbReference>
<dbReference type="SUPFAM" id="SSF53633">
    <property type="entry name" value="Carbamate kinase-like"/>
    <property type="match status" value="1"/>
</dbReference>
<accession>Q21EE9</accession>
<sequence length="300" mass="31644">MQTQDQALEVAKVLTEALPYIQRFTGKTIVVKFGGNAMTDTELQNSFARDIVLMKLVGMNPIVVHGGGPQIGDLLKKLNIESSFVDGMRVTDSATMDVVEMVLGGTVNKQIVSLINRNGGQAIGVTGKDGNLIHAKKLTVNRKSPEVQASEIIDIGHVGEVKTINRSVIDVLVNSDFIPVIAPIGVGDDGASYNINADLVAGKVAEVLQAEKLMLLTNVAGLQDKSGQVLTGLTTGRVDELIADGTIYGGMLPKISCALDAVKCGVKSAHIIDGRVPHAVLLEIFTDSGVGTLITNEYSA</sequence>
<feature type="chain" id="PRO_0000264753" description="Acetylglutamate kinase">
    <location>
        <begin position="1"/>
        <end position="300"/>
    </location>
</feature>
<feature type="binding site" evidence="1">
    <location>
        <begin position="67"/>
        <end position="68"/>
    </location>
    <ligand>
        <name>substrate</name>
    </ligand>
</feature>
<feature type="binding site" evidence="1">
    <location>
        <position position="89"/>
    </location>
    <ligand>
        <name>substrate</name>
    </ligand>
</feature>
<feature type="binding site" evidence="1">
    <location>
        <position position="194"/>
    </location>
    <ligand>
        <name>substrate</name>
    </ligand>
</feature>
<feature type="site" description="Transition state stabilizer" evidence="1">
    <location>
        <position position="32"/>
    </location>
</feature>
<feature type="site" description="Transition state stabilizer" evidence="1">
    <location>
        <position position="254"/>
    </location>
</feature>
<gene>
    <name evidence="1" type="primary">argB</name>
    <name type="ordered locus">Sde_3675</name>
</gene>
<name>ARGB_SACD2</name>
<comment type="function">
    <text evidence="1">Catalyzes the ATP-dependent phosphorylation of N-acetyl-L-glutamate.</text>
</comment>
<comment type="catalytic activity">
    <reaction evidence="1">
        <text>N-acetyl-L-glutamate + ATP = N-acetyl-L-glutamyl 5-phosphate + ADP</text>
        <dbReference type="Rhea" id="RHEA:14629"/>
        <dbReference type="ChEBI" id="CHEBI:30616"/>
        <dbReference type="ChEBI" id="CHEBI:44337"/>
        <dbReference type="ChEBI" id="CHEBI:57936"/>
        <dbReference type="ChEBI" id="CHEBI:456216"/>
        <dbReference type="EC" id="2.7.2.8"/>
    </reaction>
</comment>
<comment type="pathway">
    <text evidence="1">Amino-acid biosynthesis; L-arginine biosynthesis; N(2)-acetyl-L-ornithine from L-glutamate: step 2/4.</text>
</comment>
<comment type="subcellular location">
    <subcellularLocation>
        <location evidence="1">Cytoplasm</location>
    </subcellularLocation>
</comment>
<comment type="similarity">
    <text evidence="1">Belongs to the acetylglutamate kinase family. ArgB subfamily.</text>
</comment>
<organism>
    <name type="scientific">Saccharophagus degradans (strain 2-40 / ATCC 43961 / DSM 17024)</name>
    <dbReference type="NCBI Taxonomy" id="203122"/>
    <lineage>
        <taxon>Bacteria</taxon>
        <taxon>Pseudomonadati</taxon>
        <taxon>Pseudomonadota</taxon>
        <taxon>Gammaproteobacteria</taxon>
        <taxon>Cellvibrionales</taxon>
        <taxon>Cellvibrionaceae</taxon>
        <taxon>Saccharophagus</taxon>
    </lineage>
</organism>
<keyword id="KW-0028">Amino-acid biosynthesis</keyword>
<keyword id="KW-0055">Arginine biosynthesis</keyword>
<keyword id="KW-0067">ATP-binding</keyword>
<keyword id="KW-0963">Cytoplasm</keyword>
<keyword id="KW-0418">Kinase</keyword>
<keyword id="KW-0547">Nucleotide-binding</keyword>
<keyword id="KW-1185">Reference proteome</keyword>
<keyword id="KW-0808">Transferase</keyword>